<evidence type="ECO:0000250" key="1"/>
<evidence type="ECO:0000269" key="2">
    <source>
    </source>
</evidence>
<evidence type="ECO:0000305" key="3"/>
<organism>
    <name type="scientific">Mycobacterium tuberculosis (strain ATCC 25618 / H37Rv)</name>
    <dbReference type="NCBI Taxonomy" id="83332"/>
    <lineage>
        <taxon>Bacteria</taxon>
        <taxon>Bacillati</taxon>
        <taxon>Actinomycetota</taxon>
        <taxon>Actinomycetes</taxon>
        <taxon>Mycobacteriales</taxon>
        <taxon>Mycobacteriaceae</taxon>
        <taxon>Mycobacterium</taxon>
        <taxon>Mycobacterium tuberculosis complex</taxon>
    </lineage>
</organism>
<proteinExistence type="evidence at protein level"/>
<gene>
    <name type="primary">ligC</name>
    <name type="ordered locus">Rv3731</name>
</gene>
<reference key="1">
    <citation type="journal article" date="1998" name="Nature">
        <title>Deciphering the biology of Mycobacterium tuberculosis from the complete genome sequence.</title>
        <authorList>
            <person name="Cole S.T."/>
            <person name="Brosch R."/>
            <person name="Parkhill J."/>
            <person name="Garnier T."/>
            <person name="Churcher C.M."/>
            <person name="Harris D.E."/>
            <person name="Gordon S.V."/>
            <person name="Eiglmeier K."/>
            <person name="Gas S."/>
            <person name="Barry C.E. III"/>
            <person name="Tekaia F."/>
            <person name="Badcock K."/>
            <person name="Basham D."/>
            <person name="Brown D."/>
            <person name="Chillingworth T."/>
            <person name="Connor R."/>
            <person name="Davies R.M."/>
            <person name="Devlin K."/>
            <person name="Feltwell T."/>
            <person name="Gentles S."/>
            <person name="Hamlin N."/>
            <person name="Holroyd S."/>
            <person name="Hornsby T."/>
            <person name="Jagels K."/>
            <person name="Krogh A."/>
            <person name="McLean J."/>
            <person name="Moule S."/>
            <person name="Murphy L.D."/>
            <person name="Oliver S."/>
            <person name="Osborne J."/>
            <person name="Quail M.A."/>
            <person name="Rajandream M.A."/>
            <person name="Rogers J."/>
            <person name="Rutter S."/>
            <person name="Seeger K."/>
            <person name="Skelton S."/>
            <person name="Squares S."/>
            <person name="Squares R."/>
            <person name="Sulston J.E."/>
            <person name="Taylor K."/>
            <person name="Whitehead S."/>
            <person name="Barrell B.G."/>
        </authorList>
    </citation>
    <scope>NUCLEOTIDE SEQUENCE [LARGE SCALE GENOMIC DNA]</scope>
    <source>
        <strain>ATCC 25618 / H37Rv</strain>
    </source>
</reference>
<reference key="2">
    <citation type="journal article" date="2004" name="J. Biol. Chem.">
        <title>Biochemical and genetic analysis of the four DNA ligases of mycobacteria.</title>
        <authorList>
            <person name="Gong C."/>
            <person name="Martins A."/>
            <person name="Bongiorno P."/>
            <person name="Glickman M."/>
            <person name="Shuman S."/>
        </authorList>
    </citation>
    <scope>DISRUPTION PHENOTYPE</scope>
    <source>
        <strain>ATCC 35801 / TMC 107 / Erdman</strain>
    </source>
</reference>
<reference key="3">
    <citation type="journal article" date="2011" name="Mol. Cell. Proteomics">
        <title>Proteogenomic analysis of Mycobacterium tuberculosis by high resolution mass spectrometry.</title>
        <authorList>
            <person name="Kelkar D.S."/>
            <person name="Kumar D."/>
            <person name="Kumar P."/>
            <person name="Balakrishnan L."/>
            <person name="Muthusamy B."/>
            <person name="Yadav A.K."/>
            <person name="Shrivastava P."/>
            <person name="Marimuthu A."/>
            <person name="Anand S."/>
            <person name="Sundaram H."/>
            <person name="Kingsbury R."/>
            <person name="Harsha H.C."/>
            <person name="Nair B."/>
            <person name="Prasad T.S."/>
            <person name="Chauhan D.S."/>
            <person name="Katoch K."/>
            <person name="Katoch V.M."/>
            <person name="Kumar P."/>
            <person name="Chaerkady R."/>
            <person name="Ramachandran S."/>
            <person name="Dash D."/>
            <person name="Pandey A."/>
        </authorList>
    </citation>
    <scope>IDENTIFICATION BY MASS SPECTROMETRY [LARGE SCALE ANALYSIS]</scope>
    <source>
        <strain>ATCC 25618 / H37Rv</strain>
    </source>
</reference>
<dbReference type="EC" id="6.5.1.1"/>
<dbReference type="EMBL" id="AL123456">
    <property type="protein sequence ID" value="CCP46558.1"/>
    <property type="molecule type" value="Genomic_DNA"/>
</dbReference>
<dbReference type="RefSeq" id="NP_218248.1">
    <property type="nucleotide sequence ID" value="NC_000962.3"/>
</dbReference>
<dbReference type="RefSeq" id="WP_003917239.1">
    <property type="nucleotide sequence ID" value="NZ_NVQJ01000009.1"/>
</dbReference>
<dbReference type="SMR" id="L0TDE1"/>
<dbReference type="STRING" id="83332.Rv3731"/>
<dbReference type="PaxDb" id="83332-Rv3731"/>
<dbReference type="DNASU" id="885771"/>
<dbReference type="GeneID" id="885771"/>
<dbReference type="KEGG" id="mtu:Rv3731"/>
<dbReference type="KEGG" id="mtv:RVBD_3731"/>
<dbReference type="TubercuList" id="Rv3731"/>
<dbReference type="eggNOG" id="COG1793">
    <property type="taxonomic scope" value="Bacteria"/>
</dbReference>
<dbReference type="InParanoid" id="L0TDE1"/>
<dbReference type="OrthoDB" id="9770771at2"/>
<dbReference type="PhylomeDB" id="L0TDE1"/>
<dbReference type="Proteomes" id="UP000001584">
    <property type="component" value="Chromosome"/>
</dbReference>
<dbReference type="GO" id="GO:0005524">
    <property type="term" value="F:ATP binding"/>
    <property type="evidence" value="ECO:0007669"/>
    <property type="project" value="UniProtKB-KW"/>
</dbReference>
<dbReference type="GO" id="GO:0003910">
    <property type="term" value="F:DNA ligase (ATP) activity"/>
    <property type="evidence" value="ECO:0007669"/>
    <property type="project" value="UniProtKB-EC"/>
</dbReference>
<dbReference type="GO" id="GO:0006310">
    <property type="term" value="P:DNA recombination"/>
    <property type="evidence" value="ECO:0007669"/>
    <property type="project" value="InterPro"/>
</dbReference>
<dbReference type="GO" id="GO:0006281">
    <property type="term" value="P:DNA repair"/>
    <property type="evidence" value="ECO:0007669"/>
    <property type="project" value="InterPro"/>
</dbReference>
<dbReference type="CDD" id="cd07905">
    <property type="entry name" value="Adenylation_DNA_ligase_LigC"/>
    <property type="match status" value="1"/>
</dbReference>
<dbReference type="CDD" id="cd07970">
    <property type="entry name" value="OBF_DNA_ligase_LigC"/>
    <property type="match status" value="1"/>
</dbReference>
<dbReference type="Gene3D" id="3.30.470.30">
    <property type="entry name" value="DNA ligase/mRNA capping enzyme"/>
    <property type="match status" value="1"/>
</dbReference>
<dbReference type="Gene3D" id="2.40.50.140">
    <property type="entry name" value="Nucleic acid-binding proteins"/>
    <property type="match status" value="1"/>
</dbReference>
<dbReference type="InterPro" id="IPR044119">
    <property type="entry name" value="Adenylation_LigC-like"/>
</dbReference>
<dbReference type="InterPro" id="IPR050191">
    <property type="entry name" value="ATP-dep_DNA_ligase"/>
</dbReference>
<dbReference type="InterPro" id="IPR012309">
    <property type="entry name" value="DNA_ligase_ATP-dep_C"/>
</dbReference>
<dbReference type="InterPro" id="IPR012310">
    <property type="entry name" value="DNA_ligase_ATP-dep_cent"/>
</dbReference>
<dbReference type="InterPro" id="IPR012340">
    <property type="entry name" value="NA-bd_OB-fold"/>
</dbReference>
<dbReference type="InterPro" id="IPR044117">
    <property type="entry name" value="OBF_LigC-like"/>
</dbReference>
<dbReference type="NCBIfam" id="NF006078">
    <property type="entry name" value="PRK08224.1"/>
    <property type="match status" value="1"/>
</dbReference>
<dbReference type="PANTHER" id="PTHR45674:SF4">
    <property type="entry name" value="DNA LIGASE 1"/>
    <property type="match status" value="1"/>
</dbReference>
<dbReference type="PANTHER" id="PTHR45674">
    <property type="entry name" value="DNA LIGASE 1/3 FAMILY MEMBER"/>
    <property type="match status" value="1"/>
</dbReference>
<dbReference type="Pfam" id="PF04679">
    <property type="entry name" value="DNA_ligase_A_C"/>
    <property type="match status" value="1"/>
</dbReference>
<dbReference type="Pfam" id="PF01068">
    <property type="entry name" value="DNA_ligase_A_M"/>
    <property type="match status" value="1"/>
</dbReference>
<dbReference type="SUPFAM" id="SSF56091">
    <property type="entry name" value="DNA ligase/mRNA capping enzyme, catalytic domain"/>
    <property type="match status" value="1"/>
</dbReference>
<dbReference type="SUPFAM" id="SSF50249">
    <property type="entry name" value="Nucleic acid-binding proteins"/>
    <property type="match status" value="1"/>
</dbReference>
<dbReference type="PROSITE" id="PS50160">
    <property type="entry name" value="DNA_LIGASE_A3"/>
    <property type="match status" value="1"/>
</dbReference>
<keyword id="KW-0067">ATP-binding</keyword>
<keyword id="KW-0436">Ligase</keyword>
<keyword id="KW-0547">Nucleotide-binding</keyword>
<keyword id="KW-1185">Reference proteome</keyword>
<accession>L0TDE1</accession>
<comment type="function">
    <text evidence="1">DNA ligase that seals nicks in double-stranded DNA during DNA replication, DNA recombination and DNA repair.</text>
</comment>
<comment type="catalytic activity">
    <reaction>
        <text>ATP + (deoxyribonucleotide)n-3'-hydroxyl + 5'-phospho-(deoxyribonucleotide)m = (deoxyribonucleotide)n+m + AMP + diphosphate.</text>
        <dbReference type="EC" id="6.5.1.1"/>
    </reaction>
</comment>
<comment type="cofactor">
    <cofactor evidence="1">
        <name>a divalent metal cation</name>
        <dbReference type="ChEBI" id="CHEBI:60240"/>
    </cofactor>
</comment>
<comment type="disruption phenotype">
    <text evidence="2">Not essential for growth (in strain Erdman).</text>
</comment>
<comment type="similarity">
    <text evidence="3">Belongs to the ATP-dependent DNA ligase family.</text>
</comment>
<protein>
    <recommendedName>
        <fullName>DNA ligase C</fullName>
        <ecNumber>6.5.1.1</ecNumber>
    </recommendedName>
    <alternativeName>
        <fullName>Polydeoxyribonucleotide synthase [ATP]</fullName>
    </alternativeName>
</protein>
<feature type="chain" id="PRO_0000425953" description="DNA ligase C">
    <location>
        <begin position="1"/>
        <end position="358"/>
    </location>
</feature>
<feature type="active site" description="N6-AMP-lysine intermediate" evidence="1">
    <location>
        <position position="29"/>
    </location>
</feature>
<sequence>MQLPVMPPVSPMLAKSVTAIPPDASYEPKWDGFRSICFRDGDQVELGSRNERPMTRYFPELVAAIRAELPHRCVIDGEIIIATDHGLDFEALQQRIHPAESRVRMLADRTPASFIAFDLLALGDDDYTGRPFSERRAALVDAVTGSGADADLSIHVTPATTDMATAQRWFSEFEGAGLDGVIAKPPHITYQPDKRVMFKIKHLRTADCVVAGYRVHKSGSDAIGSLLLGLYQEDGQLASVGVIGAFPMAERRRLLTELQPLVTSFDDHPWNWAAHVAGQRTPRKNEFSRWNVGKDLSFVPLRPERVVEVRYDRMEGARFRHTAQFNRWRPDRDPRSCSYAQLERPLTVSLSDIVPGLR</sequence>
<name>LIGC_MYCTU</name>